<comment type="function">
    <text evidence="1 2">Has antimicrobial activity against E.coli, E.faecalis, P.aeruginosa, and S.aureus. Has insecticidal and hemolytic activities. Probably acts by disturbing membrane function with its amphipathic structure.</text>
</comment>
<comment type="subcellular location">
    <subcellularLocation>
        <location evidence="3">Secreted</location>
    </subcellularLocation>
</comment>
<comment type="tissue specificity">
    <text evidence="3">Expressed by the venom gland.</text>
</comment>
<comment type="mass spectrometry"/>
<comment type="toxic dose">
    <text evidence="1">LD(50) is 4.7 pmol/mg on Drosophila.</text>
</comment>
<comment type="similarity">
    <text evidence="3">Belongs to the cationic peptide 04 (cupiennin) family. 01 subfamily.</text>
</comment>
<accession>P83620</accession>
<name>TXC1B_CUPSA</name>
<feature type="peptide" id="PRO_0000045039" description="Cupiennin-1b">
    <location>
        <begin position="1"/>
        <end position="35"/>
    </location>
</feature>
<feature type="modified residue" description="Glutamic acid 1-amide" evidence="1">
    <location>
        <position position="35"/>
    </location>
</feature>
<keyword id="KW-0027">Amidation</keyword>
<keyword id="KW-0044">Antibiotic</keyword>
<keyword id="KW-0929">Antimicrobial</keyword>
<keyword id="KW-0204">Cytolysis</keyword>
<keyword id="KW-0903">Direct protein sequencing</keyword>
<keyword id="KW-0354">Hemolysis</keyword>
<keyword id="KW-0528">Neurotoxin</keyword>
<keyword id="KW-0964">Secreted</keyword>
<keyword id="KW-0800">Toxin</keyword>
<dbReference type="SMR" id="P83620"/>
<dbReference type="ArachnoServer" id="AS000290">
    <property type="toxin name" value="M-ctenitoxin-Cs1b"/>
</dbReference>
<dbReference type="GO" id="GO:0005576">
    <property type="term" value="C:extracellular region"/>
    <property type="evidence" value="ECO:0007669"/>
    <property type="project" value="UniProtKB-SubCell"/>
</dbReference>
<dbReference type="GO" id="GO:0090729">
    <property type="term" value="F:toxin activity"/>
    <property type="evidence" value="ECO:0007669"/>
    <property type="project" value="UniProtKB-KW"/>
</dbReference>
<dbReference type="GO" id="GO:0042742">
    <property type="term" value="P:defense response to bacterium"/>
    <property type="evidence" value="ECO:0007669"/>
    <property type="project" value="UniProtKB-KW"/>
</dbReference>
<dbReference type="GO" id="GO:0031640">
    <property type="term" value="P:killing of cells of another organism"/>
    <property type="evidence" value="ECO:0007669"/>
    <property type="project" value="UniProtKB-KW"/>
</dbReference>
<dbReference type="InterPro" id="IPR035164">
    <property type="entry name" value="Cupiennin"/>
</dbReference>
<dbReference type="Pfam" id="PF17563">
    <property type="entry name" value="Cu"/>
    <property type="match status" value="1"/>
</dbReference>
<proteinExistence type="evidence at protein level"/>
<protein>
    <recommendedName>
        <fullName evidence="2">Cupiennin-1b</fullName>
        <shortName evidence="3">Cu-1b</shortName>
    </recommendedName>
    <alternativeName>
        <fullName>M-ctenitoxin-Cs1b</fullName>
        <shortName>M-CNTX-Cs1b</shortName>
    </alternativeName>
</protein>
<organism evidence="3">
    <name type="scientific">Cupiennius salei</name>
    <name type="common">American wandering spider</name>
    <dbReference type="NCBI Taxonomy" id="6928"/>
    <lineage>
        <taxon>Eukaryota</taxon>
        <taxon>Metazoa</taxon>
        <taxon>Ecdysozoa</taxon>
        <taxon>Arthropoda</taxon>
        <taxon>Chelicerata</taxon>
        <taxon>Arachnida</taxon>
        <taxon>Araneae</taxon>
        <taxon>Araneomorphae</taxon>
        <taxon>Entelegynae</taxon>
        <taxon>Lycosoidea</taxon>
        <taxon>Ctenidae</taxon>
        <taxon>Cupiennius</taxon>
    </lineage>
</organism>
<reference key="1">
    <citation type="journal article" date="2002" name="J. Biol. Chem.">
        <title>Cupiennin 1, a new family of highly basic antimicrobial peptides in the venom of the spider Cupiennius salei (Ctenidae).</title>
        <authorList>
            <person name="Kuhn-Nentwig L."/>
            <person name="Mueller J."/>
            <person name="Schaller J."/>
            <person name="Walz A."/>
            <person name="Dathe M."/>
            <person name="Nentwig W."/>
        </authorList>
    </citation>
    <scope>PROTEIN SEQUENCE</scope>
    <scope>FUNCTION</scope>
    <scope>MASS SPECTROMETRY</scope>
    <scope>TOXIC DOSE</scope>
    <scope>AMIDATION AT GLU-35</scope>
    <source>
        <tissue>Venom</tissue>
    </source>
</reference>
<sequence>GFGSLFKFLAKKVAKTVAKQAAKQGAKYIANKQME</sequence>
<evidence type="ECO:0000269" key="1">
    <source>
    </source>
</evidence>
<evidence type="ECO:0000303" key="2">
    <source>
    </source>
</evidence>
<evidence type="ECO:0000305" key="3"/>